<proteinExistence type="evidence at protein level"/>
<accession>P0C6S3</accession>
<organism>
    <name type="scientific">Conus cancellatus</name>
    <name type="common">Cancellate cone</name>
    <name type="synonym">Conus austini</name>
    <dbReference type="NCBI Taxonomy" id="289020"/>
    <lineage>
        <taxon>Eukaryota</taxon>
        <taxon>Metazoa</taxon>
        <taxon>Spiralia</taxon>
        <taxon>Lophotrochozoa</taxon>
        <taxon>Mollusca</taxon>
        <taxon>Gastropoda</taxon>
        <taxon>Caenogastropoda</taxon>
        <taxon>Neogastropoda</taxon>
        <taxon>Conoidea</taxon>
        <taxon>Conidae</taxon>
        <taxon>Conus</taxon>
        <taxon>Dauciconus</taxon>
    </lineage>
</organism>
<evidence type="ECO:0000250" key="1">
    <source>
        <dbReference type="UniProtKB" id="P84704"/>
    </source>
</evidence>
<evidence type="ECO:0000269" key="2">
    <source>
    </source>
</evidence>
<evidence type="ECO:0000303" key="3">
    <source>
    </source>
</evidence>
<evidence type="ECO:0000305" key="4"/>
<keyword id="KW-0903">Direct protein sequencing</keyword>
<keyword id="KW-1015">Disulfide bond</keyword>
<keyword id="KW-0528">Neurotoxin</keyword>
<keyword id="KW-0964">Secreted</keyword>
<keyword id="KW-0800">Toxin</keyword>
<protein>
    <recommendedName>
        <fullName evidence="3">Conotoxin as14b</fullName>
    </recommendedName>
    <alternativeName>
        <fullName evidence="4">Conotoxin AsXIVB</fullName>
    </alternativeName>
</protein>
<dbReference type="SMR" id="P0C6S3"/>
<dbReference type="ConoServer" id="2829">
    <property type="toxin name" value="AsXIVB precursor"/>
</dbReference>
<dbReference type="GO" id="GO:0005576">
    <property type="term" value="C:extracellular region"/>
    <property type="evidence" value="ECO:0007669"/>
    <property type="project" value="UniProtKB-SubCell"/>
</dbReference>
<dbReference type="GO" id="GO:0090729">
    <property type="term" value="F:toxin activity"/>
    <property type="evidence" value="ECO:0007669"/>
    <property type="project" value="UniProtKB-KW"/>
</dbReference>
<feature type="peptide" id="PRO_0000326394" description="Conotoxin as14b" evidence="2">
    <location>
        <begin position="1"/>
        <end position="28"/>
    </location>
</feature>
<feature type="disulfide bond" evidence="1">
    <location>
        <begin position="7"/>
        <end position="27"/>
    </location>
</feature>
<feature type="disulfide bond" evidence="1">
    <location>
        <begin position="11"/>
        <end position="23"/>
    </location>
</feature>
<reference key="1">
    <citation type="journal article" date="2008" name="Peptides">
        <title>Two new 4-Cys conotoxins (framework 14) of the vermivorous snail Conus austini from the Gulf of Mexico with activity in the central nervous system of mice.</title>
        <authorList>
            <person name="Zugasti-Cruz A."/>
            <person name="Aguilar M.B."/>
            <person name="Falcon A."/>
            <person name="Olivera B.M."/>
            <person name="Heimer de la Cotera E.P."/>
        </authorList>
    </citation>
    <scope>PROTEIN SEQUENCE</scope>
    <scope>FUNCTION</scope>
    <scope>BIOASSAY</scope>
    <scope>SUBCELLULAR LOCATION</scope>
    <scope>MASS SPECTROMETRY</scope>
    <source>
        <tissue>Venom</tissue>
    </source>
</reference>
<name>CLEB_CONCF</name>
<sequence length="28" mass="3315">RWDVDQCIYYCLNGVVGYSYTECQTMCT</sequence>
<comment type="function">
    <text evidence="2">In vivo, intracranial injection elicits scratching and grooming activity in mice, and causes body and rear limb extension and tail curling immediately upon injection.</text>
</comment>
<comment type="subcellular location">
    <subcellularLocation>
        <location evidence="2">Secreted</location>
    </subcellularLocation>
</comment>
<comment type="tissue specificity">
    <text evidence="4">Expressed by the venom duct.</text>
</comment>
<comment type="domain">
    <text evidence="4">The cysteine framework is XIV (C-C-C-C).</text>
</comment>
<comment type="mass spectrometry" mass="3308.63" method="MALDI" evidence="2">
    <text>Monoisotopic mass.</text>
</comment>
<comment type="similarity">
    <text evidence="4">Belongs to the conotoxin L superfamily.</text>
</comment>